<name>PRGR_COLGU</name>
<comment type="function">
    <text evidence="2">The steroid hormones and their receptors are involved in the regulation of eukaryotic gene expression and affect cellular proliferation and differentiation in target tissues. Transcriptional activator of several progesteron-dependent promoters in a variety of cell types. Involved in activation of SRC-dependent MAPK signaling on hormone stimulation.</text>
</comment>
<comment type="subunit">
    <text evidence="2 3">Interacts with SMARD1 and UNC45A. Interacts with CUEDC2; the interaction promotes ubiquitination, decreases sumoylation, and represses transcriptional activity. Interacts with PIAS3; the interaction promotes sumoylation of PR in a hormone-dependent manner, inhibits DNA-binding, and alters nuclear export. Interacts with SP1; the interaction requires ligand-induced phosphorylation on Ser-345 by ERK1/2-MAPK. Interacts with PRMT2. Interacts with NCOA2 and NCOA1. Interacts with KLF9. Interacts with GTF2B (By similarity).</text>
</comment>
<comment type="subcellular location">
    <subcellularLocation>
        <location>Nucleus</location>
    </subcellularLocation>
    <subcellularLocation>
        <location>Cytoplasm</location>
    </subcellularLocation>
    <text evidence="1">Nucleoplasmic shuttling is both hormone- and cell cycle-dependent. On hormone stimulation, retained in the cytoplasm in the G(1) and G(2)/M phases (By similarity).</text>
</comment>
<comment type="domain">
    <text>Composed of three domains: a modulating N-terminal domain, a DNA-binding domain and a C-terminal ligand-binding domain.</text>
</comment>
<comment type="PTM">
    <text evidence="1">Phosphorylated on multiple serine sites. Several of these sites are hormone-dependent. Phosphorylation on Ser-294 is highly hormone-dependent and modulates ubiquitination and sumoylation on Lys-388. Phosphorylation on Ser-345 also requires induction by hormone. Basal phosphorylation on Ser-81, Ser-162, Ser-190 and Ser-400 is increased in response to progesterone and can be phosphorylated in vitro by the CDK2-A1 complex. Increased levels of phosphorylation on Ser-400 also in the presence of EGF, heregulin, IGF, PMA and FBS. Phosphorylation at this site by CDK2 is ligand-independent, and increases nuclear translocation and transcriptional activity. Phosphorylation at Ser-162 and Ser-294, but not at Ser-190, is impaired during the G(2)/M phase of the cell cycle. Phosphorylation on Ser-345 by ERK1/2 MAPK is required for interaction with SP1 (By similarity).</text>
</comment>
<comment type="PTM">
    <text evidence="1">Sumoylation is hormone-dependent and represses transcriptional activity. Sumoylation on all three sites is enhanced by PIAS3. Desumoylated by SENP1. Sumoylation on Lys-388, the main site of sumoylation, is repressed by ubiquitination on the same site, and modulated by phosphorylation at Ser-294 (By similarity).</text>
</comment>
<comment type="PTM">
    <text evidence="2">Ubiquitination is hormone-dependent and represses sumoylation on the same site (By similarity). Promoted by MAPK-mediated phosphorylation on Ser-294 (By similarity). Ubiquitinated by UBR5, leading to its degradation: UBR5 specifically recognizes and binds ligand-bound PGR when it is not associated with coactivators (NCOAs) (By similarity). In presence of NCOAs, the UBR5-degron is not accessible, preventing its ubiquitination and degradation (By similarity).</text>
</comment>
<comment type="PTM">
    <text evidence="1">Palmitoylated by ZDHHC7 and ZDHHC21. Palmitoylation is required for plasma membrane targeting and for rapid intracellular signaling via ERK and AKT kinases and cAMP generation (By similarity).</text>
</comment>
<comment type="similarity">
    <text evidence="8">Belongs to the nuclear hormone receptor family.</text>
</comment>
<dbReference type="EMBL" id="DQ234988">
    <property type="protein sequence ID" value="ABB72148.1"/>
    <property type="molecule type" value="Genomic_DNA"/>
</dbReference>
<dbReference type="SMR" id="A7X8D2"/>
<dbReference type="GO" id="GO:0005737">
    <property type="term" value="C:cytoplasm"/>
    <property type="evidence" value="ECO:0007669"/>
    <property type="project" value="UniProtKB-SubCell"/>
</dbReference>
<dbReference type="GO" id="GO:0005654">
    <property type="term" value="C:nucleoplasm"/>
    <property type="evidence" value="ECO:0007669"/>
    <property type="project" value="UniProtKB-ARBA"/>
</dbReference>
<dbReference type="GO" id="GO:0003707">
    <property type="term" value="F:nuclear steroid receptor activity"/>
    <property type="evidence" value="ECO:0007669"/>
    <property type="project" value="InterPro"/>
</dbReference>
<dbReference type="GO" id="GO:0043565">
    <property type="term" value="F:sequence-specific DNA binding"/>
    <property type="evidence" value="ECO:0007669"/>
    <property type="project" value="InterPro"/>
</dbReference>
<dbReference type="GO" id="GO:0005496">
    <property type="term" value="F:steroid binding"/>
    <property type="evidence" value="ECO:0007669"/>
    <property type="project" value="UniProtKB-KW"/>
</dbReference>
<dbReference type="GO" id="GO:0008270">
    <property type="term" value="F:zinc ion binding"/>
    <property type="evidence" value="ECO:0007669"/>
    <property type="project" value="UniProtKB-KW"/>
</dbReference>
<dbReference type="CDD" id="cd07172">
    <property type="entry name" value="NR_DBD_GR_PR"/>
    <property type="match status" value="1"/>
</dbReference>
<dbReference type="CDD" id="cd07074">
    <property type="entry name" value="NR_LBD_PR"/>
    <property type="match status" value="1"/>
</dbReference>
<dbReference type="FunFam" id="1.10.565.10:FF:000004">
    <property type="entry name" value="Androgen receptor variant"/>
    <property type="match status" value="1"/>
</dbReference>
<dbReference type="FunFam" id="3.30.50.10:FF:000027">
    <property type="entry name" value="Progesterone receptor"/>
    <property type="match status" value="1"/>
</dbReference>
<dbReference type="Gene3D" id="3.30.50.10">
    <property type="entry name" value="Erythroid Transcription Factor GATA-1, subunit A"/>
    <property type="match status" value="1"/>
</dbReference>
<dbReference type="Gene3D" id="1.10.565.10">
    <property type="entry name" value="Retinoid X Receptor"/>
    <property type="match status" value="1"/>
</dbReference>
<dbReference type="InterPro" id="IPR035500">
    <property type="entry name" value="NHR-like_dom_sf"/>
</dbReference>
<dbReference type="InterPro" id="IPR000536">
    <property type="entry name" value="Nucl_hrmn_rcpt_lig-bd"/>
</dbReference>
<dbReference type="InterPro" id="IPR050200">
    <property type="entry name" value="Nuclear_hormone_rcpt_NR3"/>
</dbReference>
<dbReference type="InterPro" id="IPR001723">
    <property type="entry name" value="Nuclear_hrmn_rcpt"/>
</dbReference>
<dbReference type="InterPro" id="IPR000128">
    <property type="entry name" value="Progest_rcpt"/>
</dbReference>
<dbReference type="InterPro" id="IPR001628">
    <property type="entry name" value="Znf_hrmn_rcpt"/>
</dbReference>
<dbReference type="InterPro" id="IPR013088">
    <property type="entry name" value="Znf_NHR/GATA"/>
</dbReference>
<dbReference type="PANTHER" id="PTHR48092">
    <property type="entry name" value="KNIRPS-RELATED PROTEIN-RELATED"/>
    <property type="match status" value="1"/>
</dbReference>
<dbReference type="Pfam" id="PF00104">
    <property type="entry name" value="Hormone_recep"/>
    <property type="match status" value="1"/>
</dbReference>
<dbReference type="Pfam" id="PF02161">
    <property type="entry name" value="Prog_receptor"/>
    <property type="match status" value="1"/>
</dbReference>
<dbReference type="Pfam" id="PF00105">
    <property type="entry name" value="zf-C4"/>
    <property type="match status" value="1"/>
</dbReference>
<dbReference type="PRINTS" id="PR00544">
    <property type="entry name" value="PROGESTRONER"/>
</dbReference>
<dbReference type="PRINTS" id="PR00398">
    <property type="entry name" value="STRDHORMONER"/>
</dbReference>
<dbReference type="PRINTS" id="PR00047">
    <property type="entry name" value="STROIDFINGER"/>
</dbReference>
<dbReference type="SMART" id="SM00430">
    <property type="entry name" value="HOLI"/>
    <property type="match status" value="1"/>
</dbReference>
<dbReference type="SMART" id="SM00399">
    <property type="entry name" value="ZnF_C4"/>
    <property type="match status" value="1"/>
</dbReference>
<dbReference type="SUPFAM" id="SSF57716">
    <property type="entry name" value="Glucocorticoid receptor-like (DNA-binding domain)"/>
    <property type="match status" value="1"/>
</dbReference>
<dbReference type="SUPFAM" id="SSF48508">
    <property type="entry name" value="Nuclear receptor ligand-binding domain"/>
    <property type="match status" value="1"/>
</dbReference>
<dbReference type="PROSITE" id="PS51843">
    <property type="entry name" value="NR_LBD"/>
    <property type="match status" value="1"/>
</dbReference>
<dbReference type="PROSITE" id="PS00031">
    <property type="entry name" value="NUCLEAR_REC_DBD_1"/>
    <property type="match status" value="1"/>
</dbReference>
<dbReference type="PROSITE" id="PS51030">
    <property type="entry name" value="NUCLEAR_REC_DBD_2"/>
    <property type="match status" value="1"/>
</dbReference>
<organism>
    <name type="scientific">Colobus guereza</name>
    <name type="common">Mantled guereza</name>
    <name type="synonym">Eastern black-and-white colobus monkey</name>
    <dbReference type="NCBI Taxonomy" id="33548"/>
    <lineage>
        <taxon>Eukaryota</taxon>
        <taxon>Metazoa</taxon>
        <taxon>Chordata</taxon>
        <taxon>Craniata</taxon>
        <taxon>Vertebrata</taxon>
        <taxon>Euteleostomi</taxon>
        <taxon>Mammalia</taxon>
        <taxon>Eutheria</taxon>
        <taxon>Euarchontoglires</taxon>
        <taxon>Primates</taxon>
        <taxon>Haplorrhini</taxon>
        <taxon>Catarrhini</taxon>
        <taxon>Cercopithecidae</taxon>
        <taxon>Colobinae</taxon>
        <taxon>Colobus</taxon>
    </lineage>
</organism>
<gene>
    <name type="primary">PGR</name>
    <name type="synonym">NR3C3</name>
</gene>
<reference key="1">
    <citation type="journal article" date="2008" name="Mol. Phylogenet. Evol.">
        <title>The human progesterone receptor shows evidence of adaptive evolution associated with its ability to act as a transcription factor.</title>
        <authorList>
            <person name="Chen C."/>
            <person name="Opazo J.C."/>
            <person name="Erez O."/>
            <person name="Uddin M."/>
            <person name="Santolaya-Forgas J."/>
            <person name="Goodman M."/>
            <person name="Grossman L.I."/>
            <person name="Romero R."/>
            <person name="Wildman D.E."/>
        </authorList>
    </citation>
    <scope>NUCLEOTIDE SEQUENCE [GENOMIC DNA]</scope>
</reference>
<keyword id="KW-0963">Cytoplasm</keyword>
<keyword id="KW-0238">DNA-binding</keyword>
<keyword id="KW-1017">Isopeptide bond</keyword>
<keyword id="KW-0446">Lipid-binding</keyword>
<keyword id="KW-0449">Lipoprotein</keyword>
<keyword id="KW-0479">Metal-binding</keyword>
<keyword id="KW-0539">Nucleus</keyword>
<keyword id="KW-0564">Palmitate</keyword>
<keyword id="KW-0597">Phosphoprotein</keyword>
<keyword id="KW-0675">Receptor</keyword>
<keyword id="KW-0754">Steroid-binding</keyword>
<keyword id="KW-0804">Transcription</keyword>
<keyword id="KW-0805">Transcription regulation</keyword>
<keyword id="KW-0832">Ubl conjugation</keyword>
<keyword id="KW-0862">Zinc</keyword>
<keyword id="KW-0863">Zinc-finger</keyword>
<accession>A7X8D2</accession>
<evidence type="ECO:0000250" key="1"/>
<evidence type="ECO:0000250" key="2">
    <source>
        <dbReference type="UniProtKB" id="P06401"/>
    </source>
</evidence>
<evidence type="ECO:0000250" key="3">
    <source>
        <dbReference type="UniProtKB" id="Q00175"/>
    </source>
</evidence>
<evidence type="ECO:0000255" key="4"/>
<evidence type="ECO:0000255" key="5">
    <source>
        <dbReference type="PROSITE-ProRule" id="PRU00407"/>
    </source>
</evidence>
<evidence type="ECO:0000255" key="6">
    <source>
        <dbReference type="PROSITE-ProRule" id="PRU01189"/>
    </source>
</evidence>
<evidence type="ECO:0000256" key="7">
    <source>
        <dbReference type="SAM" id="MobiDB-lite"/>
    </source>
</evidence>
<evidence type="ECO:0000305" key="8"/>
<protein>
    <recommendedName>
        <fullName>Progesterone receptor</fullName>
        <shortName>PR</shortName>
    </recommendedName>
    <alternativeName>
        <fullName>Nuclear receptor subfamily 3 group C member 3</fullName>
    </alternativeName>
</protein>
<proteinExistence type="inferred from homology"/>
<sequence length="934" mass="99320">MTELKSKGPRAPHVAGGPPSPEVGSPLLCRPAAGPFQGSQTSDTLPEVSAIPISLDGLLFPRLCQGQDPPDKKTQNQQSLSDVEGAYSRAEATRGTGGSSSRPPEKDSGLLDSVLDTLLAPSGPGQSQPSPPACEVTSSWCLFGPELPEDPPAAPATQRVLSPLMSRSGGKTEDSSGTAAAHKVLPRGLSPSRQLLLPTSGSPHWSGAPVKPSPQPTAVEVEEEDGSESEDSAGPLLKGKSRVLGGAAAGGGAAAVPPGAAAGGVGLVPKEDSRFSAPRVALVEQDAPMAPGRSPLATTMMDFIHVPIVPLNHALLAARTRQLLEDESYDGGAGAASAFAPPQSSPSASSTPVAVGDFPDCAYPPDAEPKDNAYPLYGDFQPLALKIKEEEEGAEASARSPGSYLVAGANPAAFPDFPLGPPPQLPPRAPPSRPGEAAVTAAPASASVSSASSPGSTLECILYKAEGALPQQGQFAPPPCKAPGAGGCLLPRDGLPSTSASAAAAAGAAPTLYPALGLNGLPQLGYQAAVLKEGLQQVYPPYLNYLRPDSEASQSPQYSFESLPQKICLICGDEASGCHYGVLTCGSCKVFFKRAMEGQHNYLCAGRNDCIVDKIRRKNCPACRLRKCCQAGMVLGGRKFKKFNKVRVMRALDAVALPQPVGIPNESQVLSQRFTFSPGQDIQLIPPLIKLLMSIEPDVIYAGHDNSKPDTSSSLLTSLNQLGERQLLSVVKWSKSLPGFRNLHIDDQITLIQYSWMSLMVFGLGWRSYKHVSGQMLYFAPDLILNEQRMKESSFYSLCLTMWQIPQEFVKLQVSQEEFLCMKVLLLLNTIPLEGLRSQTQFEEMRSSYIRELIKAIGLRQKGVVSSSQRFYQLTKLLDNLHDLVKQLHLYCLNTFIQSRALSVEFPEMMSEVIAAQLPKILAGMVKPLLFHKK</sequence>
<feature type="chain" id="PRO_0000375853" description="Progesterone receptor">
    <location>
        <begin position="1"/>
        <end position="934"/>
    </location>
</feature>
<feature type="domain" description="NR LBD" evidence="6">
    <location>
        <begin position="680"/>
        <end position="914"/>
    </location>
</feature>
<feature type="DNA-binding region" description="Nuclear receptor" evidence="5">
    <location>
        <begin position="568"/>
        <end position="640"/>
    </location>
</feature>
<feature type="zinc finger region" description="NR C4-type" evidence="5">
    <location>
        <begin position="568"/>
        <end position="588"/>
    </location>
</feature>
<feature type="zinc finger region" description="NR C4-type" evidence="5">
    <location>
        <begin position="604"/>
        <end position="628"/>
    </location>
</feature>
<feature type="region of interest" description="Modulating, Pro-Rich">
    <location>
        <begin position="1"/>
        <end position="567"/>
    </location>
</feature>
<feature type="region of interest" description="AF3; mediates transcriptional activation" evidence="2">
    <location>
        <begin position="1"/>
        <end position="164"/>
    </location>
</feature>
<feature type="region of interest" description="Disordered" evidence="7">
    <location>
        <begin position="1"/>
        <end position="49"/>
    </location>
</feature>
<feature type="region of interest" description="Disordered" evidence="7">
    <location>
        <begin position="61"/>
        <end position="239"/>
    </location>
</feature>
<feature type="region of interest" description="Mediates transcriptional transrepression" evidence="2">
    <location>
        <begin position="165"/>
        <end position="305"/>
    </location>
</feature>
<feature type="region of interest" description="Disordered" evidence="7">
    <location>
        <begin position="331"/>
        <end position="375"/>
    </location>
</feature>
<feature type="region of interest" description="Disordered" evidence="7">
    <location>
        <begin position="415"/>
        <end position="454"/>
    </location>
</feature>
<feature type="region of interest" description="AF1; mediates transcriptional activation" evidence="2">
    <location>
        <begin position="456"/>
        <end position="547"/>
    </location>
</feature>
<feature type="region of interest" description="AF2; mediates transcriptional activation" evidence="2">
    <location>
        <begin position="688"/>
        <end position="934"/>
    </location>
</feature>
<feature type="short sequence motif" description="LXXL motif 1" evidence="2">
    <location>
        <begin position="55"/>
        <end position="59"/>
    </location>
</feature>
<feature type="short sequence motif" description="LXXL motif 2" evidence="2">
    <location>
        <begin position="115"/>
        <end position="119"/>
    </location>
</feature>
<feature type="short sequence motif" description="Nuclear localization signal" evidence="4">
    <location>
        <begin position="183"/>
        <end position="187"/>
    </location>
</feature>
<feature type="compositionally biased region" description="Polar residues" evidence="7">
    <location>
        <begin position="191"/>
        <end position="203"/>
    </location>
</feature>
<feature type="compositionally biased region" description="Acidic residues" evidence="7">
    <location>
        <begin position="220"/>
        <end position="231"/>
    </location>
</feature>
<feature type="compositionally biased region" description="Low complexity" evidence="7">
    <location>
        <begin position="335"/>
        <end position="350"/>
    </location>
</feature>
<feature type="compositionally biased region" description="Pro residues" evidence="7">
    <location>
        <begin position="418"/>
        <end position="433"/>
    </location>
</feature>
<feature type="compositionally biased region" description="Low complexity" evidence="7">
    <location>
        <begin position="434"/>
        <end position="454"/>
    </location>
</feature>
<feature type="binding site" evidence="2">
    <location>
        <position position="767"/>
    </location>
    <ligand>
        <name>progesterone</name>
        <dbReference type="ChEBI" id="CHEBI:17026"/>
    </ligand>
</feature>
<feature type="modified residue" description="Phosphoserine" evidence="2">
    <location>
        <position position="20"/>
    </location>
</feature>
<feature type="modified residue" description="Phosphoserine" evidence="2">
    <location>
        <position position="81"/>
    </location>
</feature>
<feature type="modified residue" description="Phosphoserine" evidence="2">
    <location>
        <position position="130"/>
    </location>
</feature>
<feature type="modified residue" description="Phosphoserine" evidence="2">
    <location>
        <position position="162"/>
    </location>
</feature>
<feature type="modified residue" description="Phosphoserine" evidence="2">
    <location>
        <position position="190"/>
    </location>
</feature>
<feature type="modified residue" description="Phosphoserine" evidence="2">
    <location>
        <position position="213"/>
    </location>
</feature>
<feature type="modified residue" description="Phosphoserine; by MAPK1" evidence="2">
    <location>
        <position position="294"/>
    </location>
</feature>
<feature type="modified residue" description="Phosphoserine; by MAPK" evidence="2">
    <location>
        <position position="345"/>
    </location>
</feature>
<feature type="modified residue" description="Phosphoserine; by CDK2" evidence="2">
    <location>
        <position position="400"/>
    </location>
</feature>
<feature type="modified residue" description="Phosphoserine" evidence="2">
    <location>
        <position position="677"/>
    </location>
</feature>
<feature type="cross-link" description="Glycyl lysine isopeptide (Lys-Gly) (interchain with G-Cter in SUMO); alternate" evidence="1">
    <location>
        <position position="388"/>
    </location>
</feature>
<feature type="cross-link" description="Glycyl lysine isopeptide (Lys-Gly) (interchain with G-Cter in ubiquitin); alternate" evidence="2">
    <location>
        <position position="388"/>
    </location>
</feature>
<feature type="cross-link" description="Glycyl lysine isopeptide (Lys-Gly) (interchain with G-Cter in SUMO)" evidence="1">
    <location>
        <position position="532"/>
    </location>
</feature>